<organism>
    <name type="scientific">Penicillium brasilianum</name>
    <dbReference type="NCBI Taxonomy" id="104259"/>
    <lineage>
        <taxon>Eukaryota</taxon>
        <taxon>Fungi</taxon>
        <taxon>Dikarya</taxon>
        <taxon>Ascomycota</taxon>
        <taxon>Pezizomycotina</taxon>
        <taxon>Eurotiomycetes</taxon>
        <taxon>Eurotiomycetidae</taxon>
        <taxon>Eurotiales</taxon>
        <taxon>Aspergillaceae</taxon>
        <taxon>Penicillium</taxon>
    </lineage>
</organism>
<dbReference type="EC" id="1.14.13.-" evidence="7"/>
<dbReference type="EMBL" id="CDHK01000010">
    <property type="protein sequence ID" value="CEJ61318.1"/>
    <property type="molecule type" value="Genomic_DNA"/>
</dbReference>
<dbReference type="SMR" id="A0A0F7TXA8"/>
<dbReference type="STRING" id="104259.A0A0F7TXA8"/>
<dbReference type="OrthoDB" id="66881at2759"/>
<dbReference type="UniPathway" id="UPA00213"/>
<dbReference type="Proteomes" id="UP000042958">
    <property type="component" value="Unassembled WGS sequence"/>
</dbReference>
<dbReference type="GO" id="GO:0004497">
    <property type="term" value="F:monooxygenase activity"/>
    <property type="evidence" value="ECO:0007669"/>
    <property type="project" value="UniProtKB-KW"/>
</dbReference>
<dbReference type="GO" id="GO:0016114">
    <property type="term" value="P:terpenoid biosynthetic process"/>
    <property type="evidence" value="ECO:0007669"/>
    <property type="project" value="UniProtKB-UniPathway"/>
</dbReference>
<dbReference type="Gene3D" id="3.50.50.60">
    <property type="entry name" value="FAD/NAD(P)-binding domain"/>
    <property type="match status" value="2"/>
</dbReference>
<dbReference type="InterPro" id="IPR050775">
    <property type="entry name" value="FAD-binding_Monooxygenases"/>
</dbReference>
<dbReference type="InterPro" id="IPR036188">
    <property type="entry name" value="FAD/NAD-bd_sf"/>
</dbReference>
<dbReference type="InterPro" id="IPR023753">
    <property type="entry name" value="FAD/NAD-binding_dom"/>
</dbReference>
<dbReference type="PANTHER" id="PTHR43098:SF2">
    <property type="entry name" value="FAD-BINDING MONOOXYGENASE AUSB-RELATED"/>
    <property type="match status" value="1"/>
</dbReference>
<dbReference type="PANTHER" id="PTHR43098">
    <property type="entry name" value="L-ORNITHINE N(5)-MONOOXYGENASE-RELATED"/>
    <property type="match status" value="1"/>
</dbReference>
<dbReference type="Pfam" id="PF07992">
    <property type="entry name" value="Pyr_redox_2"/>
    <property type="match status" value="1"/>
</dbReference>
<dbReference type="PRINTS" id="PR00411">
    <property type="entry name" value="PNDRDTASEI"/>
</dbReference>
<dbReference type="SUPFAM" id="SSF51905">
    <property type="entry name" value="FAD/NAD(P)-binding domain"/>
    <property type="match status" value="1"/>
</dbReference>
<proteinExistence type="inferred from homology"/>
<accession>A0A0F7TXA8</accession>
<evidence type="ECO:0000250" key="1">
    <source>
        <dbReference type="UniProtKB" id="H3JQW0"/>
    </source>
</evidence>
<evidence type="ECO:0000250" key="2">
    <source>
        <dbReference type="UniProtKB" id="Q5ATK1"/>
    </source>
</evidence>
<evidence type="ECO:0000256" key="3">
    <source>
        <dbReference type="SAM" id="MobiDB-lite"/>
    </source>
</evidence>
<evidence type="ECO:0000269" key="4">
    <source>
    </source>
</evidence>
<evidence type="ECO:0000303" key="5">
    <source>
    </source>
</evidence>
<evidence type="ECO:0000305" key="6"/>
<evidence type="ECO:0000305" key="7">
    <source>
    </source>
</evidence>
<comment type="function">
    <text evidence="2 4">FAD-binding monooxygenase; part of the gene cluster A that mediates the biosynthesis of the fungal meroterpenoid acetoxydehydroaustin (PubMed:29076725). The first step of the pathway is the synthesis of 3,5-dimethylorsellinic acid by the polyketide synthase ausA (By similarity). 3,5-dimethylorsellinic acid is then prenylated by the polyprenyl transferase ausN (By similarity). Further epoxidation by the FAD-dependent monooxygenase ausM and cyclization by the probable terpene cyclase ausL lead to the formation of protoaustinoid A (By similarity). Protoaustinoid A is then oxidized to spiro-lactone preaustinoid A3 by the combined action of the FAD-binding monooxygenases ausB and ausC, and the dioxygenase ausE (By similarity). Acid-catalyzed keto-rearrangement and ring contraction of the tetraketide portion of preaustinoid A3 by ausJ lead to the formation of preaustinoid A4 (By similarity). The aldo-keto reductase ausK, with the help of ausH, is involved in the next step by transforming preaustinoid A4 into isoaustinone which is in turn hydroxylated by the P450 monooxygenase ausI to form austinolide (By similarity). The cytochrome P450 monooxygenase ausG then modifies austinolide to austinol (By similarity). Austinol is further acetylated to austin by the O-acetyltransferase ausP, which spontaneously changes to dehydroaustin (PubMed:29076725). The cytochrome P450 monooxygenase then converts dehydroaustin is into 7-dehydrodehydroaustin (PubMed:29076725). The hydroxylation catalyzed by ausR permits the second O-acetyltransferase ausQ to add an additional acetyl group to the molecule, leading to the formation of acetoxydehydroaustin (PubMed:29076725). Due to genetic rearrangements of the clusters and the subsequent loss of some enzymes, the end product of the Penicillium brasilianum austinoid biosynthesis clusters is acetoxydehydroaustin (PubMed:29076725).</text>
</comment>
<comment type="catalytic activity">
    <reaction evidence="2">
        <text>protoaustinoid A + AH2 + O2 = berkeleyone A + A + H2O</text>
        <dbReference type="Rhea" id="RHEA:65140"/>
        <dbReference type="ChEBI" id="CHEBI:13193"/>
        <dbReference type="ChEBI" id="CHEBI:15377"/>
        <dbReference type="ChEBI" id="CHEBI:15379"/>
        <dbReference type="ChEBI" id="CHEBI:17499"/>
        <dbReference type="ChEBI" id="CHEBI:69024"/>
        <dbReference type="ChEBI" id="CHEBI:156350"/>
    </reaction>
    <physiologicalReaction direction="left-to-right" evidence="2">
        <dbReference type="Rhea" id="RHEA:65141"/>
    </physiologicalReaction>
</comment>
<comment type="cofactor">
    <cofactor evidence="1">
        <name>FAD</name>
        <dbReference type="ChEBI" id="CHEBI:57692"/>
    </cofactor>
    <text evidence="1">Binds 1 FAD per subunit.</text>
</comment>
<comment type="pathway">
    <text evidence="7">Secondary metabolite biosynthesis; terpenoid biosynthesis.</text>
</comment>
<comment type="miscellaneous">
    <text evidence="7">In A.calidoustus, the austinoid gene cluster lies on a contiguous DNA region, while clusters from E.nidulans and P.brasilianum are split in their respective genomes. Genetic rearrangements provoked variability among the clusters and E.nidulans produces the least number of austionoid derivatives with the end products austinol and dehydroaustinol, while P.brasilianum can produce until acetoxydehydroaustin, and A.calidoustus produces the highest number of identified derivatives.</text>
</comment>
<comment type="similarity">
    <text evidence="6">Belongs to the FAD-binding monooxygenase family.</text>
</comment>
<reference key="1">
    <citation type="journal article" date="2015" name="Genome Announc.">
        <title>Draft genome sequence of the fungus Penicillium brasilianum MG11.</title>
        <authorList>
            <person name="Horn F."/>
            <person name="Linde J."/>
            <person name="Mattern D.J."/>
            <person name="Walther G."/>
            <person name="Guthke R."/>
            <person name="Brakhage A.A."/>
            <person name="Valiante V."/>
        </authorList>
    </citation>
    <scope>NUCLEOTIDE SEQUENCE [LARGE SCALE GENOMIC DNA]</scope>
    <source>
        <strain>MG11</strain>
    </source>
</reference>
<reference key="2">
    <citation type="journal article" date="2016" name="J. Am. Chem. Soc.">
        <title>Discovery of key dioxygenases that diverged the paraherquonin and acetoxydehydroaustin pathways in Penicillium brasilianum.</title>
        <authorList>
            <person name="Matsuda Y."/>
            <person name="Iwabuchi T."/>
            <person name="Fujimoto T."/>
            <person name="Awakawa T."/>
            <person name="Nakashima Y."/>
            <person name="Mori T."/>
            <person name="Zhang H."/>
            <person name="Hayashi F."/>
            <person name="Abe I."/>
        </authorList>
    </citation>
    <scope>FUNCTION</scope>
</reference>
<reference key="3">
    <citation type="journal article" date="2017" name="ACS Chem. Biol.">
        <title>Rewiring of the austinoid biosynthetic pathway in filamentous fungi.</title>
        <authorList>
            <person name="Mattern D.J."/>
            <person name="Valiante V."/>
            <person name="Horn F."/>
            <person name="Petzke L."/>
            <person name="Brakhage A.A."/>
        </authorList>
    </citation>
    <scope>FUNCTION</scope>
</reference>
<keyword id="KW-0274">FAD</keyword>
<keyword id="KW-0285">Flavoprotein</keyword>
<keyword id="KW-0503">Monooxygenase</keyword>
<keyword id="KW-0521">NADP</keyword>
<keyword id="KW-0560">Oxidoreductase</keyword>
<keyword id="KW-1185">Reference proteome</keyword>
<name>AUSB_PENBI</name>
<feature type="chain" id="PRO_0000453847" description="FAD-binding monooxygenase ausB">
    <location>
        <begin position="1"/>
        <end position="641"/>
    </location>
</feature>
<feature type="region of interest" description="Disordered" evidence="3">
    <location>
        <begin position="1"/>
        <end position="68"/>
    </location>
</feature>
<feature type="compositionally biased region" description="Polar residues" evidence="3">
    <location>
        <begin position="49"/>
        <end position="68"/>
    </location>
</feature>
<feature type="binding site" evidence="1">
    <location>
        <begin position="115"/>
        <end position="118"/>
    </location>
    <ligand>
        <name>FAD</name>
        <dbReference type="ChEBI" id="CHEBI:57692"/>
    </ligand>
</feature>
<feature type="binding site" evidence="1">
    <location>
        <begin position="125"/>
        <end position="127"/>
    </location>
    <ligand>
        <name>NADP(+)</name>
        <dbReference type="ChEBI" id="CHEBI:58349"/>
    </ligand>
</feature>
<feature type="binding site" evidence="1">
    <location>
        <begin position="127"/>
        <end position="128"/>
    </location>
    <ligand>
        <name>FAD</name>
        <dbReference type="ChEBI" id="CHEBI:57692"/>
    </ligand>
</feature>
<feature type="binding site" evidence="1">
    <location>
        <position position="133"/>
    </location>
    <ligand>
        <name>FAD</name>
        <dbReference type="ChEBI" id="CHEBI:57692"/>
    </ligand>
</feature>
<feature type="binding site" evidence="1">
    <location>
        <begin position="272"/>
        <end position="278"/>
    </location>
    <ligand>
        <name>NADP(+)</name>
        <dbReference type="ChEBI" id="CHEBI:58349"/>
    </ligand>
</feature>
<feature type="binding site" evidence="1">
    <location>
        <begin position="295"/>
        <end position="296"/>
    </location>
    <ligand>
        <name>NADP(+)</name>
        <dbReference type="ChEBI" id="CHEBI:58349"/>
    </ligand>
</feature>
<feature type="site" description="Transition state stabilizer" evidence="1">
    <location>
        <position position="416"/>
    </location>
</feature>
<sequence>MAIGPKPESIIGSYDHPPQAEAQTEVKSAAINGDTSPVSRLKDFATDPWLTSTDQPQPDSTTNVPYSLPDSTQDARILIVGAGYGGLLFAVRLLQSGFTLEDILLVDSAGGFGGTWYWNRYPGLMCDIESYIYMPLLEETKNIPSQKYVSGEELRTHAERIAEKWKLGARTLFRTTVSDLTWDDNKMQWIATASFSSNEKKQGSCTYTINADFAILANGTLSKPKVPDLPGIDDYTGRIFHTARWDYDYTGGSPAIPAMDRLRTKKVGVIGTGSTAVQVIPQLARWAGELTVFQRTPGAVGLQENRETDHAWWRDNVQLAGPEWQRKRCENFNAFITNPYRASLEEEDLVKDGWTKHPSFSVALGGARNLQADFLDLAKKIDKERREIGQQHINSTVRNPATAEALFNPTYGWCKRPCFHQGYFETYNRENVRLVSTPGQGITKFTINGIMWGDKEFELDLIVLATGYDLGSLCPANRARLSIHGRGGLSMSQKWASGPATLHGVMTRGFPNLFFPGTSQAGVTANQSYMFDRAAEHIAYIIQNARPRTAASAVNLKVLVEPSLEAEELWAMETVSRARAFAATKTCSAGSYTISARLGESVDESQMARHMPWGEGMASYVKILEEWRKKGDMDGLEVVYD</sequence>
<gene>
    <name evidence="5" type="primary">ausB</name>
    <name type="ORF">PMG11_09854</name>
</gene>
<protein>
    <recommendedName>
        <fullName evidence="5">FAD-binding monooxygenase ausB</fullName>
        <ecNumber evidence="7">1.14.13.-</ecNumber>
    </recommendedName>
    <alternativeName>
        <fullName evidence="5">Austinoid biosynthesis clusters protein B</fullName>
    </alternativeName>
</protein>